<feature type="transit peptide" description="Chloroplast" evidence="5">
    <location>
        <begin position="1"/>
        <end position="77"/>
    </location>
</feature>
<feature type="chain" id="PRO_0000034161" description="Thioredoxin F-type, chloroplastic">
    <location>
        <begin position="78"/>
        <end position="190"/>
    </location>
</feature>
<feature type="domain" description="Thioredoxin" evidence="1">
    <location>
        <begin position="78"/>
        <end position="189"/>
    </location>
</feature>
<feature type="region of interest" description="Disordered" evidence="2">
    <location>
        <begin position="1"/>
        <end position="31"/>
    </location>
</feature>
<feature type="compositionally biased region" description="Polar residues" evidence="2">
    <location>
        <begin position="7"/>
        <end position="30"/>
    </location>
</feature>
<feature type="active site" description="Nucleophile">
    <location>
        <position position="114"/>
    </location>
</feature>
<feature type="active site" description="Nucleophile">
    <location>
        <position position="117"/>
    </location>
</feature>
<feature type="site" description="Deprotonates C-terminal active site Cys">
    <location>
        <position position="108"/>
    </location>
</feature>
<feature type="site" description="Contributes to redox potential value">
    <location>
        <position position="115"/>
    </location>
</feature>
<feature type="site" description="Contributes to redox potential value">
    <location>
        <position position="116"/>
    </location>
</feature>
<feature type="disulfide bond" description="Redox-active" evidence="1 3">
    <location>
        <begin position="114"/>
        <end position="117"/>
    </location>
</feature>
<feature type="mutagenesis site" description="Prevents scission of the intermolecular disulfide bond by the second Cys of the active site." evidence="4">
    <original>C</original>
    <variation>S</variation>
    <location>
        <position position="117"/>
    </location>
</feature>
<feature type="helix" evidence="7">
    <location>
        <begin position="75"/>
        <end position="79"/>
    </location>
</feature>
<feature type="turn" evidence="7">
    <location>
        <begin position="80"/>
        <end position="83"/>
    </location>
</feature>
<feature type="strand" evidence="8">
    <location>
        <begin position="84"/>
        <end position="88"/>
    </location>
</feature>
<feature type="turn" evidence="8">
    <location>
        <begin position="90"/>
        <end position="92"/>
    </location>
</feature>
<feature type="helix" evidence="8">
    <location>
        <begin position="93"/>
        <end position="97"/>
    </location>
</feature>
<feature type="turn" evidence="7">
    <location>
        <begin position="100"/>
        <end position="102"/>
    </location>
</feature>
<feature type="strand" evidence="8">
    <location>
        <begin position="105"/>
        <end position="110"/>
    </location>
</feature>
<feature type="helix" evidence="8">
    <location>
        <begin position="115"/>
        <end position="130"/>
    </location>
</feature>
<feature type="strand" evidence="8">
    <location>
        <begin position="134"/>
        <end position="140"/>
    </location>
</feature>
<feature type="strand" evidence="9">
    <location>
        <begin position="142"/>
        <end position="145"/>
    </location>
</feature>
<feature type="helix" evidence="8">
    <location>
        <begin position="146"/>
        <end position="152"/>
    </location>
</feature>
<feature type="strand" evidence="8">
    <location>
        <begin position="155"/>
        <end position="175"/>
    </location>
</feature>
<feature type="helix" evidence="8">
    <location>
        <begin position="177"/>
        <end position="188"/>
    </location>
</feature>
<name>TRXF_SPIOL</name>
<sequence>MALHLSLSHQSWTSPAHPITSSDPTRSSVPGTGLSRRVDFLGSCKINGVFVVKRKDRRRMRGGEVRASMEQALGTQEMEAIVGKVTEVNKDTFWPIVKAAGDKPVVLDMFTQWCGPCKAMAPKYEKLAEEYLDVIFLKLDCNQENKTLAKELGIRVVPTFKILKENSVVGEVTGAKYDKLLEAIQAARSS</sequence>
<keyword id="KW-0002">3D-structure</keyword>
<keyword id="KW-0150">Chloroplast</keyword>
<keyword id="KW-0903">Direct protein sequencing</keyword>
<keyword id="KW-1015">Disulfide bond</keyword>
<keyword id="KW-0249">Electron transport</keyword>
<keyword id="KW-0934">Plastid</keyword>
<keyword id="KW-0676">Redox-active center</keyword>
<keyword id="KW-1185">Reference proteome</keyword>
<keyword id="KW-0809">Transit peptide</keyword>
<keyword id="KW-0813">Transport</keyword>
<dbReference type="EMBL" id="X14959">
    <property type="protein sequence ID" value="CAA33082.1"/>
    <property type="molecule type" value="mRNA"/>
</dbReference>
<dbReference type="PIR" id="S04661">
    <property type="entry name" value="S04661"/>
</dbReference>
<dbReference type="PDB" id="1F9M">
    <property type="method" value="X-ray"/>
    <property type="resolution" value="1.86 A"/>
    <property type="chains" value="A/B=78-189"/>
</dbReference>
<dbReference type="PDB" id="1FAA">
    <property type="method" value="X-ray"/>
    <property type="resolution" value="1.85 A"/>
    <property type="chains" value="A=69-189"/>
</dbReference>
<dbReference type="PDB" id="2PU9">
    <property type="method" value="X-ray"/>
    <property type="resolution" value="1.65 A"/>
    <property type="chains" value="C=79-189"/>
</dbReference>
<dbReference type="PDB" id="2PVO">
    <property type="method" value="X-ray"/>
    <property type="resolution" value="3.40 A"/>
    <property type="chains" value="C=79-189"/>
</dbReference>
<dbReference type="PDBsum" id="1F9M"/>
<dbReference type="PDBsum" id="1FAA"/>
<dbReference type="PDBsum" id="2PU9"/>
<dbReference type="PDBsum" id="2PVO"/>
<dbReference type="SMR" id="P09856"/>
<dbReference type="DIP" id="DIP-37834N"/>
<dbReference type="IntAct" id="P09856">
    <property type="interactions" value="2"/>
</dbReference>
<dbReference type="SABIO-RK" id="P09856"/>
<dbReference type="EvolutionaryTrace" id="P09856"/>
<dbReference type="Proteomes" id="UP001155700">
    <property type="component" value="Unplaced"/>
</dbReference>
<dbReference type="GO" id="GO:0009507">
    <property type="term" value="C:chloroplast"/>
    <property type="evidence" value="ECO:0007669"/>
    <property type="project" value="UniProtKB-SubCell"/>
</dbReference>
<dbReference type="GO" id="GO:0005829">
    <property type="term" value="C:cytosol"/>
    <property type="evidence" value="ECO:0000318"/>
    <property type="project" value="GO_Central"/>
</dbReference>
<dbReference type="GO" id="GO:0015035">
    <property type="term" value="F:protein-disulfide reductase activity"/>
    <property type="evidence" value="ECO:0000318"/>
    <property type="project" value="GO_Central"/>
</dbReference>
<dbReference type="CDD" id="cd02947">
    <property type="entry name" value="TRX_family"/>
    <property type="match status" value="1"/>
</dbReference>
<dbReference type="Gene3D" id="3.40.30.10">
    <property type="entry name" value="Glutaredoxin"/>
    <property type="match status" value="1"/>
</dbReference>
<dbReference type="InterPro" id="IPR036249">
    <property type="entry name" value="Thioredoxin-like_sf"/>
</dbReference>
<dbReference type="InterPro" id="IPR017937">
    <property type="entry name" value="Thioredoxin_CS"/>
</dbReference>
<dbReference type="InterPro" id="IPR013766">
    <property type="entry name" value="Thioredoxin_domain"/>
</dbReference>
<dbReference type="PANTHER" id="PTHR46115">
    <property type="entry name" value="THIOREDOXIN-LIKE PROTEIN 1"/>
    <property type="match status" value="1"/>
</dbReference>
<dbReference type="Pfam" id="PF00085">
    <property type="entry name" value="Thioredoxin"/>
    <property type="match status" value="1"/>
</dbReference>
<dbReference type="PRINTS" id="PR00421">
    <property type="entry name" value="THIOREDOXIN"/>
</dbReference>
<dbReference type="SUPFAM" id="SSF52833">
    <property type="entry name" value="Thioredoxin-like"/>
    <property type="match status" value="1"/>
</dbReference>
<dbReference type="PROSITE" id="PS00194">
    <property type="entry name" value="THIOREDOXIN_1"/>
    <property type="match status" value="1"/>
</dbReference>
<dbReference type="PROSITE" id="PS51352">
    <property type="entry name" value="THIOREDOXIN_2"/>
    <property type="match status" value="1"/>
</dbReference>
<reference key="1">
    <citation type="journal article" date="1989" name="Eur. J. Biochem.">
        <title>Primary structure of spinach-chloroplast thioredoxin f. Protein sequencing and analysis of complete cDNA clones for spinach-chloroplast thioredoxin f.</title>
        <authorList>
            <person name="Kamo M."/>
            <person name="Tsugita A."/>
            <person name="Wiessner C."/>
            <person name="Wedel N."/>
            <person name="Bartling D."/>
            <person name="Herrmann R.G."/>
            <person name="Aguilar F."/>
            <person name="Gardet-Salvi L."/>
            <person name="Schurmann P."/>
        </authorList>
    </citation>
    <scope>NUCLEOTIDE SEQUENCE [MRNA]</scope>
    <scope>PROTEIN SEQUENCE OF 78-190</scope>
</reference>
<reference key="2">
    <citation type="journal article" date="1983" name="Biochem. Biophys. Res. Commun.">
        <title>Spinach chloroplast thioredoxins in evolutionary drift.</title>
        <authorList>
            <person name="Tsugita A."/>
            <person name="Maeda K."/>
            <person name="Schurmann P."/>
        </authorList>
    </citation>
    <scope>PRELIMINARY PARTIAL PROTEIN SEQUENCE</scope>
</reference>
<reference key="3">
    <citation type="journal article" date="2000" name="J. Mol. Biol.">
        <title>Crystal structures of two functionally different thioredoxins in spinach chloroplasts.</title>
        <authorList>
            <person name="Capitani G."/>
            <person name="Markovic-Housley Z."/>
            <person name="DelVal G."/>
            <person name="Morris M."/>
            <person name="Jansonius J.N."/>
            <person name="Schurmann P."/>
        </authorList>
    </citation>
    <scope>X-RAY CRYSTALLOGRAPHY (1.85 ANGSTROMS) OF 70-189</scope>
    <scope>DISULFIDE BOND</scope>
</reference>
<reference key="4">
    <citation type="journal article" date="2007" name="Nature">
        <title>Structural snapshots along the reaction pathway of ferredoxin-thioredoxin reductase.</title>
        <authorList>
            <person name="Dai S."/>
            <person name="Friemann R."/>
            <person name="Glauser D.A."/>
            <person name="Bourquin F."/>
            <person name="Manieri W."/>
            <person name="Schurmann P."/>
            <person name="Eklund H."/>
        </authorList>
    </citation>
    <scope>X-RAY CRYSTALLOGRAPHY (1.65 ANGSTROMS) OF 79-189 OF MUTANT SER-117 IN COMPLEXES WITH BACTERIAL FTRC; FTRV AND PETF/FERREDOXIN</scope>
    <scope>SUBUNIT</scope>
    <scope>MUTAGENESIS OF CYS-117</scope>
</reference>
<accession>P09856</accession>
<proteinExistence type="evidence at protein level"/>
<comment type="function">
    <text>Participates in various redox reactions through the reversible oxidation of the active center dithiol to a disulfide. The F form is known to activate a number of enzymes of the photosynthetic carbon cycle.</text>
</comment>
<comment type="subunit">
    <text evidence="4">Forms a complex with heterodimeric ferredoxin-thioredoxin reductase (FTR) and ferredoxin.</text>
</comment>
<comment type="interaction">
    <interactant intactId="EBI-863615">
        <id>P09856</id>
    </interactant>
    <interactant intactId="EBI-863211">
        <id>Q55389</id>
        <label>ftrC</label>
    </interactant>
    <organismsDiffer>true</organismsDiffer>
    <experiments>5</experiments>
</comment>
<comment type="subcellular location">
    <subcellularLocation>
        <location>Plastid</location>
        <location>Chloroplast</location>
    </subcellularLocation>
</comment>
<comment type="similarity">
    <text evidence="6">Belongs to the thioredoxin family. Plant F-type subfamily.</text>
</comment>
<protein>
    <recommendedName>
        <fullName>Thioredoxin F-type, chloroplastic</fullName>
        <shortName>Trx-F</shortName>
    </recommendedName>
</protein>
<evidence type="ECO:0000255" key="1">
    <source>
        <dbReference type="PROSITE-ProRule" id="PRU00691"/>
    </source>
</evidence>
<evidence type="ECO:0000256" key="2">
    <source>
        <dbReference type="SAM" id="MobiDB-lite"/>
    </source>
</evidence>
<evidence type="ECO:0000269" key="3">
    <source>
    </source>
</evidence>
<evidence type="ECO:0000269" key="4">
    <source>
    </source>
</evidence>
<evidence type="ECO:0000269" key="5">
    <source>
    </source>
</evidence>
<evidence type="ECO:0000305" key="6"/>
<evidence type="ECO:0007829" key="7">
    <source>
        <dbReference type="PDB" id="1FAA"/>
    </source>
</evidence>
<evidence type="ECO:0007829" key="8">
    <source>
        <dbReference type="PDB" id="2PU9"/>
    </source>
</evidence>
<evidence type="ECO:0007829" key="9">
    <source>
        <dbReference type="PDB" id="2PVO"/>
    </source>
</evidence>
<organism>
    <name type="scientific">Spinacia oleracea</name>
    <name type="common">Spinach</name>
    <dbReference type="NCBI Taxonomy" id="3562"/>
    <lineage>
        <taxon>Eukaryota</taxon>
        <taxon>Viridiplantae</taxon>
        <taxon>Streptophyta</taxon>
        <taxon>Embryophyta</taxon>
        <taxon>Tracheophyta</taxon>
        <taxon>Spermatophyta</taxon>
        <taxon>Magnoliopsida</taxon>
        <taxon>eudicotyledons</taxon>
        <taxon>Gunneridae</taxon>
        <taxon>Pentapetalae</taxon>
        <taxon>Caryophyllales</taxon>
        <taxon>Chenopodiaceae</taxon>
        <taxon>Chenopodioideae</taxon>
        <taxon>Anserineae</taxon>
        <taxon>Spinacia</taxon>
    </lineage>
</organism>